<comment type="function">
    <text evidence="1">Catalyzes the reversible phosphorylation of UMP to UDP.</text>
</comment>
<comment type="catalytic activity">
    <reaction evidence="1">
        <text>UMP + ATP = UDP + ADP</text>
        <dbReference type="Rhea" id="RHEA:24400"/>
        <dbReference type="ChEBI" id="CHEBI:30616"/>
        <dbReference type="ChEBI" id="CHEBI:57865"/>
        <dbReference type="ChEBI" id="CHEBI:58223"/>
        <dbReference type="ChEBI" id="CHEBI:456216"/>
        <dbReference type="EC" id="2.7.4.22"/>
    </reaction>
</comment>
<comment type="activity regulation">
    <text evidence="1">Allosterically activated by GTP. Inhibited by UTP.</text>
</comment>
<comment type="pathway">
    <text evidence="1">Pyrimidine metabolism; CTP biosynthesis via de novo pathway; UDP from UMP (UMPK route): step 1/1.</text>
</comment>
<comment type="subunit">
    <text evidence="1">Homohexamer.</text>
</comment>
<comment type="subcellular location">
    <subcellularLocation>
        <location evidence="1">Cytoplasm</location>
    </subcellularLocation>
</comment>
<comment type="similarity">
    <text evidence="1">Belongs to the UMP kinase family.</text>
</comment>
<dbReference type="EC" id="2.7.4.22" evidence="1"/>
<dbReference type="EMBL" id="CP000393">
    <property type="protein sequence ID" value="ABG52826.1"/>
    <property type="molecule type" value="Genomic_DNA"/>
</dbReference>
<dbReference type="RefSeq" id="WP_011613156.1">
    <property type="nucleotide sequence ID" value="NC_008312.1"/>
</dbReference>
<dbReference type="SMR" id="Q10Y48"/>
<dbReference type="STRING" id="203124.Tery_3779"/>
<dbReference type="KEGG" id="ter:Tery_3779"/>
<dbReference type="eggNOG" id="COG0528">
    <property type="taxonomic scope" value="Bacteria"/>
</dbReference>
<dbReference type="HOGENOM" id="CLU_033861_0_0_3"/>
<dbReference type="OrthoDB" id="9807458at2"/>
<dbReference type="UniPathway" id="UPA00159">
    <property type="reaction ID" value="UER00275"/>
</dbReference>
<dbReference type="GO" id="GO:0005737">
    <property type="term" value="C:cytoplasm"/>
    <property type="evidence" value="ECO:0007669"/>
    <property type="project" value="UniProtKB-SubCell"/>
</dbReference>
<dbReference type="GO" id="GO:0005524">
    <property type="term" value="F:ATP binding"/>
    <property type="evidence" value="ECO:0007669"/>
    <property type="project" value="UniProtKB-KW"/>
</dbReference>
<dbReference type="GO" id="GO:0033862">
    <property type="term" value="F:UMP kinase activity"/>
    <property type="evidence" value="ECO:0007669"/>
    <property type="project" value="UniProtKB-EC"/>
</dbReference>
<dbReference type="GO" id="GO:0044210">
    <property type="term" value="P:'de novo' CTP biosynthetic process"/>
    <property type="evidence" value="ECO:0007669"/>
    <property type="project" value="UniProtKB-UniRule"/>
</dbReference>
<dbReference type="GO" id="GO:0006225">
    <property type="term" value="P:UDP biosynthetic process"/>
    <property type="evidence" value="ECO:0007669"/>
    <property type="project" value="TreeGrafter"/>
</dbReference>
<dbReference type="CDD" id="cd04254">
    <property type="entry name" value="AAK_UMPK-PyrH-Ec"/>
    <property type="match status" value="1"/>
</dbReference>
<dbReference type="FunFam" id="3.40.1160.10:FF:000001">
    <property type="entry name" value="Uridylate kinase"/>
    <property type="match status" value="1"/>
</dbReference>
<dbReference type="Gene3D" id="3.40.1160.10">
    <property type="entry name" value="Acetylglutamate kinase-like"/>
    <property type="match status" value="1"/>
</dbReference>
<dbReference type="HAMAP" id="MF_01220_B">
    <property type="entry name" value="PyrH_B"/>
    <property type="match status" value="1"/>
</dbReference>
<dbReference type="InterPro" id="IPR036393">
    <property type="entry name" value="AceGlu_kinase-like_sf"/>
</dbReference>
<dbReference type="InterPro" id="IPR001048">
    <property type="entry name" value="Asp/Glu/Uridylate_kinase"/>
</dbReference>
<dbReference type="InterPro" id="IPR011817">
    <property type="entry name" value="Uridylate_kinase"/>
</dbReference>
<dbReference type="InterPro" id="IPR015963">
    <property type="entry name" value="Uridylate_kinase_bac"/>
</dbReference>
<dbReference type="NCBIfam" id="TIGR02075">
    <property type="entry name" value="pyrH_bact"/>
    <property type="match status" value="1"/>
</dbReference>
<dbReference type="PANTHER" id="PTHR42833">
    <property type="entry name" value="URIDYLATE KINASE"/>
    <property type="match status" value="1"/>
</dbReference>
<dbReference type="PANTHER" id="PTHR42833:SF4">
    <property type="entry name" value="URIDYLATE KINASE PUMPKIN, CHLOROPLASTIC"/>
    <property type="match status" value="1"/>
</dbReference>
<dbReference type="Pfam" id="PF00696">
    <property type="entry name" value="AA_kinase"/>
    <property type="match status" value="1"/>
</dbReference>
<dbReference type="PIRSF" id="PIRSF005650">
    <property type="entry name" value="Uridylate_kin"/>
    <property type="match status" value="1"/>
</dbReference>
<dbReference type="SUPFAM" id="SSF53633">
    <property type="entry name" value="Carbamate kinase-like"/>
    <property type="match status" value="1"/>
</dbReference>
<protein>
    <recommendedName>
        <fullName evidence="1">Uridylate kinase</fullName>
        <shortName evidence="1">UK</shortName>
        <ecNumber evidence="1">2.7.4.22</ecNumber>
    </recommendedName>
    <alternativeName>
        <fullName evidence="1">Uridine monophosphate kinase</fullName>
        <shortName evidence="1">UMP kinase</shortName>
        <shortName evidence="1">UMPK</shortName>
    </alternativeName>
</protein>
<name>PYRH_TRIEI</name>
<keyword id="KW-0021">Allosteric enzyme</keyword>
<keyword id="KW-0067">ATP-binding</keyword>
<keyword id="KW-0963">Cytoplasm</keyword>
<keyword id="KW-0418">Kinase</keyword>
<keyword id="KW-0547">Nucleotide-binding</keyword>
<keyword id="KW-0665">Pyrimidine biosynthesis</keyword>
<keyword id="KW-0808">Transferase</keyword>
<evidence type="ECO:0000255" key="1">
    <source>
        <dbReference type="HAMAP-Rule" id="MF_01220"/>
    </source>
</evidence>
<gene>
    <name evidence="1" type="primary">pyrH</name>
    <name type="ordered locus">Tery_3779</name>
</gene>
<accession>Q10Y48</accession>
<feature type="chain" id="PRO_1000054048" description="Uridylate kinase">
    <location>
        <begin position="1"/>
        <end position="244"/>
    </location>
</feature>
<feature type="region of interest" description="Involved in allosteric activation by GTP" evidence="1">
    <location>
        <begin position="19"/>
        <end position="24"/>
    </location>
</feature>
<feature type="binding site" evidence="1">
    <location>
        <begin position="11"/>
        <end position="14"/>
    </location>
    <ligand>
        <name>ATP</name>
        <dbReference type="ChEBI" id="CHEBI:30616"/>
    </ligand>
</feature>
<feature type="binding site" evidence="1">
    <location>
        <position position="53"/>
    </location>
    <ligand>
        <name>UMP</name>
        <dbReference type="ChEBI" id="CHEBI:57865"/>
    </ligand>
</feature>
<feature type="binding site" evidence="1">
    <location>
        <position position="54"/>
    </location>
    <ligand>
        <name>ATP</name>
        <dbReference type="ChEBI" id="CHEBI:30616"/>
    </ligand>
</feature>
<feature type="binding site" evidence="1">
    <location>
        <position position="58"/>
    </location>
    <ligand>
        <name>ATP</name>
        <dbReference type="ChEBI" id="CHEBI:30616"/>
    </ligand>
</feature>
<feature type="binding site" evidence="1">
    <location>
        <position position="73"/>
    </location>
    <ligand>
        <name>UMP</name>
        <dbReference type="ChEBI" id="CHEBI:57865"/>
    </ligand>
</feature>
<feature type="binding site" evidence="1">
    <location>
        <begin position="134"/>
        <end position="141"/>
    </location>
    <ligand>
        <name>UMP</name>
        <dbReference type="ChEBI" id="CHEBI:57865"/>
    </ligand>
</feature>
<feature type="binding site" evidence="1">
    <location>
        <position position="161"/>
    </location>
    <ligand>
        <name>ATP</name>
        <dbReference type="ChEBI" id="CHEBI:30616"/>
    </ligand>
</feature>
<feature type="binding site" evidence="1">
    <location>
        <position position="167"/>
    </location>
    <ligand>
        <name>ATP</name>
        <dbReference type="ChEBI" id="CHEBI:30616"/>
    </ligand>
</feature>
<feature type="binding site" evidence="1">
    <location>
        <position position="170"/>
    </location>
    <ligand>
        <name>ATP</name>
        <dbReference type="ChEBI" id="CHEBI:30616"/>
    </ligand>
</feature>
<proteinExistence type="inferred from homology"/>
<organism>
    <name type="scientific">Trichodesmium erythraeum (strain IMS101)</name>
    <dbReference type="NCBI Taxonomy" id="203124"/>
    <lineage>
        <taxon>Bacteria</taxon>
        <taxon>Bacillati</taxon>
        <taxon>Cyanobacteriota</taxon>
        <taxon>Cyanophyceae</taxon>
        <taxon>Oscillatoriophycideae</taxon>
        <taxon>Oscillatoriales</taxon>
        <taxon>Microcoleaceae</taxon>
        <taxon>Trichodesmium</taxon>
    </lineage>
</organism>
<sequence>MRKIYQRVLLKLSGEALMGSLGYGIDPAVVQGIAQEVAEVAATGIQIAIVVGGGNIFRGVKAASKGMDRATADYVGMIATVMNAITLQDALEQVGVPTRVQTAIAMQELAEPYIRRRAIRHLEKGRVVVFGAGSGNPFFTTDTTAALRAAEIEAEVIFKATKVDGVYDSDPHKNQEAKRYESLSYGEVLTLDLRVMDSTAIALCKENNIPIIVFNLSVSGNICKAVMGEKIGTIVGGFHESKRS</sequence>
<reference key="1">
    <citation type="journal article" date="2015" name="Proc. Natl. Acad. Sci. U.S.A.">
        <title>Trichodesmium genome maintains abundant, widespread noncoding DNA in situ, despite oligotrophic lifestyle.</title>
        <authorList>
            <person name="Walworth N."/>
            <person name="Pfreundt U."/>
            <person name="Nelson W.C."/>
            <person name="Mincer T."/>
            <person name="Heidelberg J.F."/>
            <person name="Fu F."/>
            <person name="Waterbury J.B."/>
            <person name="Glavina del Rio T."/>
            <person name="Goodwin L."/>
            <person name="Kyrpides N.C."/>
            <person name="Land M.L."/>
            <person name="Woyke T."/>
            <person name="Hutchins D.A."/>
            <person name="Hess W.R."/>
            <person name="Webb E.A."/>
        </authorList>
    </citation>
    <scope>NUCLEOTIDE SEQUENCE [LARGE SCALE GENOMIC DNA]</scope>
    <source>
        <strain>IMS101</strain>
    </source>
</reference>